<keyword id="KW-0030">Aminoacyl-tRNA synthetase</keyword>
<keyword id="KW-0067">ATP-binding</keyword>
<keyword id="KW-0963">Cytoplasm</keyword>
<keyword id="KW-0436">Ligase</keyword>
<keyword id="KW-0547">Nucleotide-binding</keyword>
<keyword id="KW-0648">Protein biosynthesis</keyword>
<keyword id="KW-1185">Reference proteome</keyword>
<gene>
    <name evidence="1" type="primary">argS</name>
    <name type="ordered locus">PMN2A_1554</name>
</gene>
<comment type="catalytic activity">
    <reaction evidence="1">
        <text>tRNA(Arg) + L-arginine + ATP = L-arginyl-tRNA(Arg) + AMP + diphosphate</text>
        <dbReference type="Rhea" id="RHEA:20301"/>
        <dbReference type="Rhea" id="RHEA-COMP:9658"/>
        <dbReference type="Rhea" id="RHEA-COMP:9673"/>
        <dbReference type="ChEBI" id="CHEBI:30616"/>
        <dbReference type="ChEBI" id="CHEBI:32682"/>
        <dbReference type="ChEBI" id="CHEBI:33019"/>
        <dbReference type="ChEBI" id="CHEBI:78442"/>
        <dbReference type="ChEBI" id="CHEBI:78513"/>
        <dbReference type="ChEBI" id="CHEBI:456215"/>
        <dbReference type="EC" id="6.1.1.19"/>
    </reaction>
</comment>
<comment type="subunit">
    <text evidence="1">Monomer.</text>
</comment>
<comment type="subcellular location">
    <subcellularLocation>
        <location evidence="1">Cytoplasm</location>
    </subcellularLocation>
</comment>
<comment type="similarity">
    <text evidence="1">Belongs to the class-I aminoacyl-tRNA synthetase family.</text>
</comment>
<dbReference type="EC" id="6.1.1.19" evidence="1"/>
<dbReference type="EMBL" id="CP000095">
    <property type="protein sequence ID" value="AAZ59042.1"/>
    <property type="molecule type" value="Genomic_DNA"/>
</dbReference>
<dbReference type="RefSeq" id="WP_011294187.1">
    <property type="nucleotide sequence ID" value="NC_007335.2"/>
</dbReference>
<dbReference type="SMR" id="Q46HI6"/>
<dbReference type="STRING" id="59920.PMN2A_1554"/>
<dbReference type="KEGG" id="pmn:PMN2A_1554"/>
<dbReference type="HOGENOM" id="CLU_006406_5_1_3"/>
<dbReference type="OrthoDB" id="9805987at2"/>
<dbReference type="PhylomeDB" id="Q46HI6"/>
<dbReference type="Proteomes" id="UP000002535">
    <property type="component" value="Chromosome"/>
</dbReference>
<dbReference type="GO" id="GO:0005737">
    <property type="term" value="C:cytoplasm"/>
    <property type="evidence" value="ECO:0007669"/>
    <property type="project" value="UniProtKB-SubCell"/>
</dbReference>
<dbReference type="GO" id="GO:0004814">
    <property type="term" value="F:arginine-tRNA ligase activity"/>
    <property type="evidence" value="ECO:0007669"/>
    <property type="project" value="UniProtKB-UniRule"/>
</dbReference>
<dbReference type="GO" id="GO:0005524">
    <property type="term" value="F:ATP binding"/>
    <property type="evidence" value="ECO:0007669"/>
    <property type="project" value="UniProtKB-UniRule"/>
</dbReference>
<dbReference type="GO" id="GO:0006420">
    <property type="term" value="P:arginyl-tRNA aminoacylation"/>
    <property type="evidence" value="ECO:0007669"/>
    <property type="project" value="UniProtKB-UniRule"/>
</dbReference>
<dbReference type="CDD" id="cd07956">
    <property type="entry name" value="Anticodon_Ia_Arg"/>
    <property type="match status" value="1"/>
</dbReference>
<dbReference type="CDD" id="cd00671">
    <property type="entry name" value="ArgRS_core"/>
    <property type="match status" value="1"/>
</dbReference>
<dbReference type="FunFam" id="3.40.50.620:FF:000030">
    <property type="entry name" value="Arginine--tRNA ligase"/>
    <property type="match status" value="1"/>
</dbReference>
<dbReference type="FunFam" id="1.10.730.10:FF:000006">
    <property type="entry name" value="Arginyl-tRNA synthetase 2, mitochondrial"/>
    <property type="match status" value="1"/>
</dbReference>
<dbReference type="Gene3D" id="3.30.1360.70">
    <property type="entry name" value="Arginyl tRNA synthetase N-terminal domain"/>
    <property type="match status" value="1"/>
</dbReference>
<dbReference type="Gene3D" id="3.40.50.620">
    <property type="entry name" value="HUPs"/>
    <property type="match status" value="1"/>
</dbReference>
<dbReference type="Gene3D" id="1.10.730.10">
    <property type="entry name" value="Isoleucyl-tRNA Synthetase, Domain 1"/>
    <property type="match status" value="1"/>
</dbReference>
<dbReference type="HAMAP" id="MF_00123">
    <property type="entry name" value="Arg_tRNA_synth"/>
    <property type="match status" value="1"/>
</dbReference>
<dbReference type="InterPro" id="IPR001412">
    <property type="entry name" value="aa-tRNA-synth_I_CS"/>
</dbReference>
<dbReference type="InterPro" id="IPR001278">
    <property type="entry name" value="Arg-tRNA-ligase"/>
</dbReference>
<dbReference type="InterPro" id="IPR005148">
    <property type="entry name" value="Arg-tRNA-synth_N"/>
</dbReference>
<dbReference type="InterPro" id="IPR036695">
    <property type="entry name" value="Arg-tRNA-synth_N_sf"/>
</dbReference>
<dbReference type="InterPro" id="IPR035684">
    <property type="entry name" value="ArgRS_core"/>
</dbReference>
<dbReference type="InterPro" id="IPR008909">
    <property type="entry name" value="DALR_anticod-bd"/>
</dbReference>
<dbReference type="InterPro" id="IPR014729">
    <property type="entry name" value="Rossmann-like_a/b/a_fold"/>
</dbReference>
<dbReference type="InterPro" id="IPR009080">
    <property type="entry name" value="tRNAsynth_Ia_anticodon-bd"/>
</dbReference>
<dbReference type="NCBIfam" id="TIGR00456">
    <property type="entry name" value="argS"/>
    <property type="match status" value="1"/>
</dbReference>
<dbReference type="PANTHER" id="PTHR11956:SF5">
    <property type="entry name" value="ARGININE--TRNA LIGASE, CYTOPLASMIC"/>
    <property type="match status" value="1"/>
</dbReference>
<dbReference type="PANTHER" id="PTHR11956">
    <property type="entry name" value="ARGINYL-TRNA SYNTHETASE"/>
    <property type="match status" value="1"/>
</dbReference>
<dbReference type="Pfam" id="PF03485">
    <property type="entry name" value="Arg_tRNA_synt_N"/>
    <property type="match status" value="1"/>
</dbReference>
<dbReference type="Pfam" id="PF05746">
    <property type="entry name" value="DALR_1"/>
    <property type="match status" value="1"/>
</dbReference>
<dbReference type="Pfam" id="PF00750">
    <property type="entry name" value="tRNA-synt_1d"/>
    <property type="match status" value="1"/>
</dbReference>
<dbReference type="PRINTS" id="PR01038">
    <property type="entry name" value="TRNASYNTHARG"/>
</dbReference>
<dbReference type="SMART" id="SM01016">
    <property type="entry name" value="Arg_tRNA_synt_N"/>
    <property type="match status" value="1"/>
</dbReference>
<dbReference type="SMART" id="SM00836">
    <property type="entry name" value="DALR_1"/>
    <property type="match status" value="1"/>
</dbReference>
<dbReference type="SUPFAM" id="SSF47323">
    <property type="entry name" value="Anticodon-binding domain of a subclass of class I aminoacyl-tRNA synthetases"/>
    <property type="match status" value="1"/>
</dbReference>
<dbReference type="SUPFAM" id="SSF55190">
    <property type="entry name" value="Arginyl-tRNA synthetase (ArgRS), N-terminal 'additional' domain"/>
    <property type="match status" value="1"/>
</dbReference>
<dbReference type="SUPFAM" id="SSF52374">
    <property type="entry name" value="Nucleotidylyl transferase"/>
    <property type="match status" value="1"/>
</dbReference>
<dbReference type="PROSITE" id="PS00178">
    <property type="entry name" value="AA_TRNA_LIGASE_I"/>
    <property type="match status" value="1"/>
</dbReference>
<accession>Q46HI6</accession>
<protein>
    <recommendedName>
        <fullName evidence="1">Arginine--tRNA ligase</fullName>
        <ecNumber evidence="1">6.1.1.19</ecNumber>
    </recommendedName>
    <alternativeName>
        <fullName evidence="1">Arginyl-tRNA synthetase</fullName>
        <shortName evidence="1">ArgRS</shortName>
    </alternativeName>
</protein>
<evidence type="ECO:0000255" key="1">
    <source>
        <dbReference type="HAMAP-Rule" id="MF_00123"/>
    </source>
</evidence>
<proteinExistence type="inferred from homology"/>
<feature type="chain" id="PRO_0000242066" description="Arginine--tRNA ligase">
    <location>
        <begin position="1"/>
        <end position="607"/>
    </location>
</feature>
<feature type="short sequence motif" description="'HIGH' region">
    <location>
        <begin position="147"/>
        <end position="157"/>
    </location>
</feature>
<name>SYR_PROMT</name>
<organism>
    <name type="scientific">Prochlorococcus marinus (strain NATL2A)</name>
    <dbReference type="NCBI Taxonomy" id="59920"/>
    <lineage>
        <taxon>Bacteria</taxon>
        <taxon>Bacillati</taxon>
        <taxon>Cyanobacteriota</taxon>
        <taxon>Cyanophyceae</taxon>
        <taxon>Synechococcales</taxon>
        <taxon>Prochlorococcaceae</taxon>
        <taxon>Prochlorococcus</taxon>
    </lineage>
</organism>
<reference key="1">
    <citation type="journal article" date="2007" name="PLoS Genet.">
        <title>Patterns and implications of gene gain and loss in the evolution of Prochlorococcus.</title>
        <authorList>
            <person name="Kettler G.C."/>
            <person name="Martiny A.C."/>
            <person name="Huang K."/>
            <person name="Zucker J."/>
            <person name="Coleman M.L."/>
            <person name="Rodrigue S."/>
            <person name="Chen F."/>
            <person name="Lapidus A."/>
            <person name="Ferriera S."/>
            <person name="Johnson J."/>
            <person name="Steglich C."/>
            <person name="Church G.M."/>
            <person name="Richardson P."/>
            <person name="Chisholm S.W."/>
        </authorList>
    </citation>
    <scope>NUCLEOTIDE SEQUENCE [LARGE SCALE GENOMIC DNA]</scope>
    <source>
        <strain>NATL2A</strain>
    </source>
</reference>
<sequence>MLEISARLEEALNRAFIKVFPQEDRSSKTSSILTGSNLVPASKPEFGDFQINCALSLAKEIKQPPREIAQKIANQLQKDNDFVRMCNPPRIAGPGFINLSINSKTLISEIHVRLNDKRLGVPLKKFSTDKIEEGKSNNRVILDFSSPNIAKEMHVGHLRSTIIGDSLARILEFRGYEVLRLNHVGDWGTQFGMLITHLKEVVPEVLHTKDVVEISDLVNFYRQAKKRFDEDQIFQNKSRSEVVNLQAGDKESLIAWQLLCNQSRKEFQKIYDRLDIKLTERGESFYNKFLVDVINDLKNKKLLINDQGAQCIFLDGLVGKNGKPQPIIIQKSDGGFNYATTDLAAIKYRLTIPPHGDGACRLIYVTDAGQASHFSGVFQIAKLANWIPTDCQIEHVPFGLVQGEDGKKLKTRSGETIRLVDLLDEAIQRAKNDLKNRLNTERRSENENFIDKVSTTVGIASIKYADLSQNRISNYQFSFDKMLSLQGNTAPYLLYALVRIAGISRKGGDLNVSSHNIQFNESQEWELIRKLLQLDYIIAEVEKELLPNRLCGYLFELSQTFNRFYDQVPILKASEPSRASRLILCSITADTLKLGMSLLGIPTLERM</sequence>